<keyword id="KW-1064">Adaptive immunity</keyword>
<keyword id="KW-1003">Cell membrane</keyword>
<keyword id="KW-1015">Disulfide bond</keyword>
<keyword id="KW-0391">Immunity</keyword>
<keyword id="KW-1280">Immunoglobulin</keyword>
<keyword id="KW-0393">Immunoglobulin domain</keyword>
<keyword id="KW-0472">Membrane</keyword>
<keyword id="KW-1267">Proteomics identification</keyword>
<keyword id="KW-1185">Reference proteome</keyword>
<keyword id="KW-0964">Secreted</keyword>
<keyword id="KW-0732">Signal</keyword>
<protein>
    <recommendedName>
        <fullName evidence="4 9">Immunoglobulin lambda variable 3-12</fullName>
    </recommendedName>
</protein>
<dbReference type="EMBL" id="AC244157">
    <property type="status" value="NOT_ANNOTATED_CDS"/>
    <property type="molecule type" value="Genomic_DNA"/>
</dbReference>
<dbReference type="EMBL" id="CH471095">
    <property type="protein sequence ID" value="EAW59536.1"/>
    <property type="status" value="ALT_SEQ"/>
    <property type="molecule type" value="Genomic_DNA"/>
</dbReference>
<dbReference type="SMR" id="A0A075B6K2"/>
<dbReference type="FunCoup" id="A0A075B6K2">
    <property type="interactions" value="429"/>
</dbReference>
<dbReference type="IMGT_GENE-DB" id="IGLV3-12"/>
<dbReference type="BioMuta" id="IGLV3-12"/>
<dbReference type="MassIVE" id="A0A075B6K2"/>
<dbReference type="Ensembl" id="ENST00000390313.3">
    <property type="protein sequence ID" value="ENSP00000374848.3"/>
    <property type="gene ID" value="ENSG00000211667.3"/>
</dbReference>
<dbReference type="UCSC" id="uc062cde.1">
    <property type="organism name" value="human"/>
</dbReference>
<dbReference type="AGR" id="HGNC:5898"/>
<dbReference type="GeneCards" id="IGLV3-12"/>
<dbReference type="HGNC" id="HGNC:5898">
    <property type="gene designation" value="IGLV3-12"/>
</dbReference>
<dbReference type="HPA" id="ENSG00000211667">
    <property type="expression patterns" value="Tissue enhanced (lymphoid)"/>
</dbReference>
<dbReference type="neXtProt" id="NX_A0A075B6K2"/>
<dbReference type="OpenTargets" id="ENSG00000211667"/>
<dbReference type="VEuPathDB" id="HostDB:ENSG00000211667"/>
<dbReference type="GeneTree" id="ENSGT00940000162558"/>
<dbReference type="HOGENOM" id="CLU_077975_4_0_1"/>
<dbReference type="InParanoid" id="A0A075B6K2"/>
<dbReference type="OMA" id="PGGLWIE"/>
<dbReference type="OrthoDB" id="9531984at2759"/>
<dbReference type="PAN-GO" id="A0A075B6K2">
    <property type="GO annotations" value="3 GO annotations based on evolutionary models"/>
</dbReference>
<dbReference type="PhylomeDB" id="A0A075B6K2"/>
<dbReference type="SignaLink" id="A0A075B6K2"/>
<dbReference type="Pharos" id="A0A075B6K2">
    <property type="development level" value="Tdark"/>
</dbReference>
<dbReference type="PRO" id="PR:A0A075B6K2"/>
<dbReference type="Proteomes" id="UP000005640">
    <property type="component" value="Chromosome 22"/>
</dbReference>
<dbReference type="RNAct" id="A0A075B6K2">
    <property type="molecule type" value="protein"/>
</dbReference>
<dbReference type="Bgee" id="ENSG00000211667">
    <property type="expression patterns" value="Expressed in granulocyte and 72 other cell types or tissues"/>
</dbReference>
<dbReference type="GO" id="GO:0005576">
    <property type="term" value="C:extracellular region"/>
    <property type="evidence" value="ECO:0007669"/>
    <property type="project" value="UniProtKB-SubCell"/>
</dbReference>
<dbReference type="GO" id="GO:0019814">
    <property type="term" value="C:immunoglobulin complex"/>
    <property type="evidence" value="ECO:0000318"/>
    <property type="project" value="GO_Central"/>
</dbReference>
<dbReference type="GO" id="GO:0005886">
    <property type="term" value="C:plasma membrane"/>
    <property type="evidence" value="ECO:0007669"/>
    <property type="project" value="UniProtKB-SubCell"/>
</dbReference>
<dbReference type="GO" id="GO:0002250">
    <property type="term" value="P:adaptive immune response"/>
    <property type="evidence" value="ECO:0007669"/>
    <property type="project" value="UniProtKB-KW"/>
</dbReference>
<dbReference type="GO" id="GO:0006955">
    <property type="term" value="P:immune response"/>
    <property type="evidence" value="ECO:0000318"/>
    <property type="project" value="GO_Central"/>
</dbReference>
<dbReference type="FunFam" id="2.60.40.10:FF:000620">
    <property type="entry name" value="Immunoglobulin lambda locus"/>
    <property type="match status" value="1"/>
</dbReference>
<dbReference type="Gene3D" id="2.60.40.10">
    <property type="entry name" value="Immunoglobulins"/>
    <property type="match status" value="1"/>
</dbReference>
<dbReference type="InterPro" id="IPR007110">
    <property type="entry name" value="Ig-like_dom"/>
</dbReference>
<dbReference type="InterPro" id="IPR036179">
    <property type="entry name" value="Ig-like_dom_sf"/>
</dbReference>
<dbReference type="InterPro" id="IPR013783">
    <property type="entry name" value="Ig-like_fold"/>
</dbReference>
<dbReference type="InterPro" id="IPR003599">
    <property type="entry name" value="Ig_sub"/>
</dbReference>
<dbReference type="InterPro" id="IPR013106">
    <property type="entry name" value="Ig_V-set"/>
</dbReference>
<dbReference type="InterPro" id="IPR050150">
    <property type="entry name" value="IgV_Light_Chain"/>
</dbReference>
<dbReference type="PANTHER" id="PTHR23267">
    <property type="entry name" value="IMMUNOGLOBULIN LIGHT CHAIN"/>
    <property type="match status" value="1"/>
</dbReference>
<dbReference type="Pfam" id="PF07686">
    <property type="entry name" value="V-set"/>
    <property type="match status" value="1"/>
</dbReference>
<dbReference type="SMART" id="SM00409">
    <property type="entry name" value="IG"/>
    <property type="match status" value="1"/>
</dbReference>
<dbReference type="SMART" id="SM00406">
    <property type="entry name" value="IGv"/>
    <property type="match status" value="1"/>
</dbReference>
<dbReference type="SUPFAM" id="SSF48726">
    <property type="entry name" value="Immunoglobulin"/>
    <property type="match status" value="1"/>
</dbReference>
<dbReference type="PROSITE" id="PS50835">
    <property type="entry name" value="IG_LIKE"/>
    <property type="match status" value="1"/>
</dbReference>
<gene>
    <name evidence="4 9" type="primary">IGLV3-12</name>
</gene>
<comment type="function">
    <text evidence="5 6 7 8">V region of the variable domain of immunoglobulin light chains that participates in the antigen recognition (PubMed:24600447). Immunoglobulins, also known as antibodies, are membrane-bound or secreted glycoproteins produced by B lymphocytes. In the recognition phase of humoral immunity, the membrane-bound immunoglobulins serve as receptors which, upon binding of a specific antigen, trigger the clonal expansion and differentiation of B lymphocytes into immunoglobulins-secreting plasma cells. Secreted immunoglobulins mediate the effector phase of humoral immunity, which results in the elimination of bound antigens (PubMed:20176268, PubMed:22158414). The antigen binding site is formed by the variable domain of one heavy chain, together with that of its associated light chain. Thus, each immunoglobulin has two antigen binding sites with remarkable affinity for a particular antigen. The variable domains are assembled by a process called V-(D)-J rearrangement and can then be subjected to somatic hypermutations which, after exposure to antigen and selection, allow affinity maturation for a particular antigen (PubMed:17576170, PubMed:20176268).</text>
</comment>
<comment type="subunit">
    <text evidence="6">Immunoglobulins are composed of two identical heavy chains and two identical light chains; disulfide-linked.</text>
</comment>
<comment type="subcellular location">
    <subcellularLocation>
        <location evidence="6 7">Secreted</location>
    </subcellularLocation>
    <subcellularLocation>
        <location evidence="6 7">Cell membrane</location>
    </subcellularLocation>
</comment>
<comment type="polymorphism">
    <text>There are several alleles. The sequence shown is that of IMGT allele IGLV3-12*02.</text>
</comment>
<comment type="caution">
    <text evidence="10">For an example of a full-length immunoglobulin lambda light chain see AC P0DOX8.</text>
</comment>
<comment type="sequence caution" evidence="10">
    <conflict type="erroneous gene model prediction">
        <sequence resource="EMBL-CDS" id="EAW59536"/>
    </conflict>
</comment>
<feature type="signal peptide" evidence="2">
    <location>
        <begin position="1"/>
        <end position="20"/>
    </location>
</feature>
<feature type="chain" id="PRO_5007375726" description="Immunoglobulin lambda variable 3-12" evidence="2">
    <location>
        <begin position="21"/>
        <end position="115"/>
    </location>
</feature>
<feature type="domain" description="Ig-like" evidence="3">
    <location>
        <begin position="21"/>
        <end position="115" status="greater than"/>
    </location>
</feature>
<feature type="region of interest" description="Framework-1" evidence="1">
    <location>
        <begin position="20"/>
        <end position="41"/>
    </location>
</feature>
<feature type="region of interest" description="Complementarity-determining-1" evidence="1">
    <location>
        <begin position="42"/>
        <end position="50"/>
    </location>
</feature>
<feature type="region of interest" description="Framework-2" evidence="1">
    <location>
        <begin position="51"/>
        <end position="67"/>
    </location>
</feature>
<feature type="region of interest" description="Complementarity-determining-2" evidence="1">
    <location>
        <begin position="68"/>
        <end position="70"/>
    </location>
</feature>
<feature type="region of interest" description="Framework-3" evidence="1">
    <location>
        <begin position="71"/>
        <end position="106"/>
    </location>
</feature>
<feature type="region of interest" description="Complementarity-determining-3" evidence="1">
    <location>
        <begin position="107"/>
        <end position="115" status="greater than"/>
    </location>
</feature>
<feature type="disulfide bond" evidence="3">
    <location>
        <begin position="41"/>
        <end position="106"/>
    </location>
</feature>
<feature type="non-terminal residue">
    <location>
        <position position="115"/>
    </location>
</feature>
<proteinExistence type="evidence at protein level"/>
<organism>
    <name type="scientific">Homo sapiens</name>
    <name type="common">Human</name>
    <dbReference type="NCBI Taxonomy" id="9606"/>
    <lineage>
        <taxon>Eukaryota</taxon>
        <taxon>Metazoa</taxon>
        <taxon>Chordata</taxon>
        <taxon>Craniata</taxon>
        <taxon>Vertebrata</taxon>
        <taxon>Euteleostomi</taxon>
        <taxon>Mammalia</taxon>
        <taxon>Eutheria</taxon>
        <taxon>Euarchontoglires</taxon>
        <taxon>Primates</taxon>
        <taxon>Haplorrhini</taxon>
        <taxon>Catarrhini</taxon>
        <taxon>Hominidae</taxon>
        <taxon>Homo</taxon>
    </lineage>
</organism>
<name>LV312_HUMAN</name>
<accession>A0A075B6K2</accession>
<sequence>MAWTPLLLSLLAHCTGSATSYELTQPHSVSVATAQMARITCGGNNIGSKAVHWYQQKPGQDPVLVIYSDSNRPSGIPERFSGSNPGNTATLTISRIEAGDEADYYCQVWDSSSDH</sequence>
<reference key="1">
    <citation type="journal article" date="1999" name="Nature">
        <title>The DNA sequence of human chromosome 22.</title>
        <authorList>
            <person name="Dunham I."/>
            <person name="Hunt A.R."/>
            <person name="Collins J.E."/>
            <person name="Bruskiewich R."/>
            <person name="Beare D.M."/>
            <person name="Clamp M."/>
            <person name="Smink L.J."/>
            <person name="Ainscough R."/>
            <person name="Almeida J.P."/>
            <person name="Babbage A.K."/>
            <person name="Bagguley C."/>
            <person name="Bailey J."/>
            <person name="Barlow K.F."/>
            <person name="Bates K.N."/>
            <person name="Beasley O.P."/>
            <person name="Bird C.P."/>
            <person name="Blakey S.E."/>
            <person name="Bridgeman A.M."/>
            <person name="Buck D."/>
            <person name="Burgess J."/>
            <person name="Burrill W.D."/>
            <person name="Burton J."/>
            <person name="Carder C."/>
            <person name="Carter N.P."/>
            <person name="Chen Y."/>
            <person name="Clark G."/>
            <person name="Clegg S.M."/>
            <person name="Cobley V.E."/>
            <person name="Cole C.G."/>
            <person name="Collier R.E."/>
            <person name="Connor R."/>
            <person name="Conroy D."/>
            <person name="Corby N.R."/>
            <person name="Coville G.J."/>
            <person name="Cox A.V."/>
            <person name="Davis J."/>
            <person name="Dawson E."/>
            <person name="Dhami P.D."/>
            <person name="Dockree C."/>
            <person name="Dodsworth S.J."/>
            <person name="Durbin R.M."/>
            <person name="Ellington A.G."/>
            <person name="Evans K.L."/>
            <person name="Fey J.M."/>
            <person name="Fleming K."/>
            <person name="French L."/>
            <person name="Garner A.A."/>
            <person name="Gilbert J.G.R."/>
            <person name="Goward M.E."/>
            <person name="Grafham D.V."/>
            <person name="Griffiths M.N.D."/>
            <person name="Hall C."/>
            <person name="Hall R.E."/>
            <person name="Hall-Tamlyn G."/>
            <person name="Heathcott R.W."/>
            <person name="Ho S."/>
            <person name="Holmes S."/>
            <person name="Hunt S.E."/>
            <person name="Jones M.C."/>
            <person name="Kershaw J."/>
            <person name="Kimberley A.M."/>
            <person name="King A."/>
            <person name="Laird G.K."/>
            <person name="Langford C.F."/>
            <person name="Leversha M.A."/>
            <person name="Lloyd C."/>
            <person name="Lloyd D.M."/>
            <person name="Martyn I.D."/>
            <person name="Mashreghi-Mohammadi M."/>
            <person name="Matthews L.H."/>
            <person name="Mccann O.T."/>
            <person name="Mcclay J."/>
            <person name="Mclaren S."/>
            <person name="McMurray A.A."/>
            <person name="Milne S.A."/>
            <person name="Mortimore B.J."/>
            <person name="Odell C.N."/>
            <person name="Pavitt R."/>
            <person name="Pearce A.V."/>
            <person name="Pearson D."/>
            <person name="Phillimore B.J.C.T."/>
            <person name="Phillips S.H."/>
            <person name="Plumb R.W."/>
            <person name="Ramsay H."/>
            <person name="Ramsey Y."/>
            <person name="Rogers L."/>
            <person name="Ross M.T."/>
            <person name="Scott C.E."/>
            <person name="Sehra H.K."/>
            <person name="Skuce C.D."/>
            <person name="Smalley S."/>
            <person name="Smith M.L."/>
            <person name="Soderlund C."/>
            <person name="Spragon L."/>
            <person name="Steward C.A."/>
            <person name="Sulston J.E."/>
            <person name="Swann R.M."/>
            <person name="Vaudin M."/>
            <person name="Wall M."/>
            <person name="Wallis J.M."/>
            <person name="Whiteley M.N."/>
            <person name="Willey D.L."/>
            <person name="Williams L."/>
            <person name="Williams S.A."/>
            <person name="Williamson H."/>
            <person name="Wilmer T.E."/>
            <person name="Wilming L."/>
            <person name="Wright C.L."/>
            <person name="Hubbard T."/>
            <person name="Bentley D.R."/>
            <person name="Beck S."/>
            <person name="Rogers J."/>
            <person name="Shimizu N."/>
            <person name="Minoshima S."/>
            <person name="Kawasaki K."/>
            <person name="Sasaki T."/>
            <person name="Asakawa S."/>
            <person name="Kudoh J."/>
            <person name="Shintani A."/>
            <person name="Shibuya K."/>
            <person name="Yoshizaki Y."/>
            <person name="Aoki N."/>
            <person name="Mitsuyama S."/>
            <person name="Roe B.A."/>
            <person name="Chen F."/>
            <person name="Chu L."/>
            <person name="Crabtree J."/>
            <person name="Deschamps S."/>
            <person name="Do A."/>
            <person name="Do T."/>
            <person name="Dorman A."/>
            <person name="Fang F."/>
            <person name="Fu Y."/>
            <person name="Hu P."/>
            <person name="Hua A."/>
            <person name="Kenton S."/>
            <person name="Lai H."/>
            <person name="Lao H.I."/>
            <person name="Lewis J."/>
            <person name="Lewis S."/>
            <person name="Lin S.-P."/>
            <person name="Loh P."/>
            <person name="Malaj E."/>
            <person name="Nguyen T."/>
            <person name="Pan H."/>
            <person name="Phan S."/>
            <person name="Qi S."/>
            <person name="Qian Y."/>
            <person name="Ray L."/>
            <person name="Ren Q."/>
            <person name="Shaull S."/>
            <person name="Sloan D."/>
            <person name="Song L."/>
            <person name="Wang Q."/>
            <person name="Wang Y."/>
            <person name="Wang Z."/>
            <person name="White J."/>
            <person name="Willingham D."/>
            <person name="Wu H."/>
            <person name="Yao Z."/>
            <person name="Zhan M."/>
            <person name="Zhang G."/>
            <person name="Chissoe S."/>
            <person name="Murray J."/>
            <person name="Miller N."/>
            <person name="Minx P."/>
            <person name="Fulton R."/>
            <person name="Johnson D."/>
            <person name="Bemis G."/>
            <person name="Bentley D."/>
            <person name="Bradshaw H."/>
            <person name="Bourne S."/>
            <person name="Cordes M."/>
            <person name="Du Z."/>
            <person name="Fulton L."/>
            <person name="Goela D."/>
            <person name="Graves T."/>
            <person name="Hawkins J."/>
            <person name="Hinds K."/>
            <person name="Kemp K."/>
            <person name="Latreille P."/>
            <person name="Layman D."/>
            <person name="Ozersky P."/>
            <person name="Rohlfing T."/>
            <person name="Scheet P."/>
            <person name="Walker C."/>
            <person name="Wamsley A."/>
            <person name="Wohldmann P."/>
            <person name="Pepin K."/>
            <person name="Nelson J."/>
            <person name="Korf I."/>
            <person name="Bedell J.A."/>
            <person name="Hillier L.W."/>
            <person name="Mardis E."/>
            <person name="Waterston R."/>
            <person name="Wilson R."/>
            <person name="Emanuel B.S."/>
            <person name="Shaikh T."/>
            <person name="Kurahashi H."/>
            <person name="Saitta S."/>
            <person name="Budarf M.L."/>
            <person name="McDermid H.E."/>
            <person name="Johnson A."/>
            <person name="Wong A.C.C."/>
            <person name="Morrow B.E."/>
            <person name="Edelmann L."/>
            <person name="Kim U.J."/>
            <person name="Shizuya H."/>
            <person name="Simon M.I."/>
            <person name="Dumanski J.P."/>
            <person name="Peyrard M."/>
            <person name="Kedra D."/>
            <person name="Seroussi E."/>
            <person name="Fransson I."/>
            <person name="Tapia I."/>
            <person name="Bruder C.E."/>
            <person name="O'Brien K.P."/>
            <person name="Wilkinson P."/>
            <person name="Bodenteich A."/>
            <person name="Hartman K."/>
            <person name="Hu X."/>
            <person name="Khan A.S."/>
            <person name="Lane L."/>
            <person name="Tilahun Y."/>
            <person name="Wright H."/>
        </authorList>
    </citation>
    <scope>NUCLEOTIDE SEQUENCE [LARGE SCALE GENOMIC DNA] (IMGT ALLELE IGLV3-12*02)</scope>
</reference>
<reference key="2">
    <citation type="submission" date="2005-07" db="EMBL/GenBank/DDBJ databases">
        <authorList>
            <person name="Mural R.J."/>
            <person name="Istrail S."/>
            <person name="Sutton G.G."/>
            <person name="Florea L."/>
            <person name="Halpern A.L."/>
            <person name="Mobarry C.M."/>
            <person name="Lippert R."/>
            <person name="Walenz B."/>
            <person name="Shatkay H."/>
            <person name="Dew I."/>
            <person name="Miller J.R."/>
            <person name="Flanigan M.J."/>
            <person name="Edwards N.J."/>
            <person name="Bolanos R."/>
            <person name="Fasulo D."/>
            <person name="Halldorsson B.V."/>
            <person name="Hannenhalli S."/>
            <person name="Turner R."/>
            <person name="Yooseph S."/>
            <person name="Lu F."/>
            <person name="Nusskern D.R."/>
            <person name="Shue B.C."/>
            <person name="Zheng X.H."/>
            <person name="Zhong F."/>
            <person name="Delcher A.L."/>
            <person name="Huson D.H."/>
            <person name="Kravitz S.A."/>
            <person name="Mouchard L."/>
            <person name="Reinert K."/>
            <person name="Remington K.A."/>
            <person name="Clark A.G."/>
            <person name="Waterman M.S."/>
            <person name="Eichler E.E."/>
            <person name="Adams M.D."/>
            <person name="Hunkapiller M.W."/>
            <person name="Myers E.W."/>
            <person name="Venter J.C."/>
        </authorList>
    </citation>
    <scope>NUCLEOTIDE SEQUENCE [LARGE SCALE GENOMIC DNA]</scope>
</reference>
<reference key="3">
    <citation type="journal article" date="2001" name="Exp. Clin. Immunogenet.">
        <title>Nomenclature of the human immunoglobulin lambda (IGL) genes.</title>
        <authorList>
            <person name="Lefranc M.P."/>
        </authorList>
    </citation>
    <scope>NOMENCLATURE</scope>
</reference>
<reference key="4">
    <citation type="book" date="2001" name="The Immunoglobulin FactsBook.">
        <title>The Immunoglobulin FactsBook.</title>
        <editorList>
            <person name="Lefranc M.P."/>
            <person name="Lefranc G."/>
        </editorList>
        <authorList>
            <person name="Lefranc M.P."/>
            <person name="Lefranc G."/>
        </authorList>
    </citation>
    <scope>NOMENCLATURE</scope>
</reference>
<reference key="5">
    <citation type="journal article" date="2007" name="Annu. Rev. Genet.">
        <title>Immunoglobulin somatic hypermutation.</title>
        <authorList>
            <person name="Teng G."/>
            <person name="Papavasiliou F.N."/>
        </authorList>
    </citation>
    <scope>REVIEW ON SOMATIC HYPERMUTATION</scope>
</reference>
<reference key="6">
    <citation type="journal article" date="2010" name="J. Allergy Clin. Immunol.">
        <title>Structure and function of immunoglobulins.</title>
        <authorList>
            <person name="Schroeder H.W. Jr."/>
            <person name="Cavacini L."/>
        </authorList>
    </citation>
    <scope>REVIEW ON IMMUNOGLOBULINS</scope>
</reference>
<reference key="7">
    <citation type="journal article" date="2012" name="Nat. Rev. Immunol.">
        <title>Molecular programming of B cell memory.</title>
        <authorList>
            <person name="McHeyzer-Williams M."/>
            <person name="Okitsu S."/>
            <person name="Wang N."/>
            <person name="McHeyzer-Williams L."/>
        </authorList>
    </citation>
    <scope>REVIEW ON FUNCTION</scope>
</reference>
<reference key="8">
    <citation type="journal article" date="2014" name="Front. Immunol.">
        <title>Immunoglobulin and T Cell Receptor Genes: IMGT((R)) and the Birth and Rise of Immunoinformatics.</title>
        <authorList>
            <person name="Lefranc M.P."/>
        </authorList>
    </citation>
    <scope>NOMENCLATURE</scope>
</reference>
<evidence type="ECO:0000250" key="1">
    <source>
        <dbReference type="UniProtKB" id="P01721"/>
    </source>
</evidence>
<evidence type="ECO:0000255" key="2"/>
<evidence type="ECO:0000255" key="3">
    <source>
        <dbReference type="PROSITE-ProRule" id="PRU00114"/>
    </source>
</evidence>
<evidence type="ECO:0000303" key="4">
    <source>
    </source>
</evidence>
<evidence type="ECO:0000303" key="5">
    <source>
    </source>
</evidence>
<evidence type="ECO:0000303" key="6">
    <source>
    </source>
</evidence>
<evidence type="ECO:0000303" key="7">
    <source>
    </source>
</evidence>
<evidence type="ECO:0000303" key="8">
    <source>
    </source>
</evidence>
<evidence type="ECO:0000303" key="9">
    <source ref="4"/>
</evidence>
<evidence type="ECO:0000305" key="10"/>